<keyword id="KW-0256">Endoplasmic reticulum</keyword>
<keyword id="KW-0325">Glycoprotein</keyword>
<keyword id="KW-1185">Reference proteome</keyword>
<keyword id="KW-0732">Signal</keyword>
<gene>
    <name evidence="8" type="primary">P3h4</name>
    <name type="synonym">Leprel4</name>
    <name evidence="6" type="synonym">Sc65</name>
</gene>
<name>SC65_RAT</name>
<protein>
    <recommendedName>
        <fullName evidence="2">Endoplasmic reticulum protein SC65</fullName>
    </recommendedName>
    <alternativeName>
        <fullName>Leprecan-like protein 4</fullName>
    </alternativeName>
    <alternativeName>
        <fullName evidence="8">Prolyl 3-hydroxylase family member 4</fullName>
    </alternativeName>
    <alternativeName>
        <fullName evidence="6">Synaptonemal complex protein SC65</fullName>
    </alternativeName>
</protein>
<evidence type="ECO:0000250" key="1">
    <source>
        <dbReference type="UniProtKB" id="Q8K2B0"/>
    </source>
</evidence>
<evidence type="ECO:0000250" key="2">
    <source>
        <dbReference type="UniProtKB" id="Q92791"/>
    </source>
</evidence>
<evidence type="ECO:0000255" key="3"/>
<evidence type="ECO:0000256" key="4">
    <source>
        <dbReference type="SAM" id="MobiDB-lite"/>
    </source>
</evidence>
<evidence type="ECO:0000269" key="5">
    <source>
    </source>
</evidence>
<evidence type="ECO:0000303" key="6">
    <source>
    </source>
</evidence>
<evidence type="ECO:0000305" key="7"/>
<evidence type="ECO:0000312" key="8">
    <source>
        <dbReference type="RGD" id="620767"/>
    </source>
</evidence>
<dbReference type="EMBL" id="AABR07072182">
    <property type="status" value="NOT_ANNOTATED_CDS"/>
    <property type="molecule type" value="Genomic_DNA"/>
</dbReference>
<dbReference type="EMBL" id="CH473948">
    <property type="protein sequence ID" value="EDM06035.1"/>
    <property type="molecule type" value="Genomic_DNA"/>
</dbReference>
<dbReference type="EMBL" id="X65454">
    <property type="protein sequence ID" value="CAA46449.1"/>
    <property type="status" value="ALT_SEQ"/>
    <property type="molecule type" value="mRNA"/>
</dbReference>
<dbReference type="PIR" id="A56822">
    <property type="entry name" value="A56822"/>
</dbReference>
<dbReference type="RefSeq" id="NP_067592.2">
    <property type="nucleotide sequence ID" value="NM_021581.2"/>
</dbReference>
<dbReference type="SMR" id="Q64375"/>
<dbReference type="BioGRID" id="248724">
    <property type="interactions" value="1"/>
</dbReference>
<dbReference type="FunCoup" id="Q64375">
    <property type="interactions" value="169"/>
</dbReference>
<dbReference type="IntAct" id="Q64375">
    <property type="interactions" value="1"/>
</dbReference>
<dbReference type="STRING" id="10116.ENSRNOP00000068162"/>
<dbReference type="GlyCosmos" id="Q64375">
    <property type="glycosylation" value="1 site, No reported glycans"/>
</dbReference>
<dbReference type="GlyGen" id="Q64375">
    <property type="glycosylation" value="1 site"/>
</dbReference>
<dbReference type="PhosphoSitePlus" id="Q64375"/>
<dbReference type="PaxDb" id="10116-ENSRNOP00000068162"/>
<dbReference type="Ensembl" id="ENSRNOT00000076585.3">
    <property type="protein sequence ID" value="ENSRNOP00000068162.1"/>
    <property type="gene ID" value="ENSRNOG00000015787.9"/>
</dbReference>
<dbReference type="GeneID" id="59101"/>
<dbReference type="KEGG" id="rno:59101"/>
<dbReference type="UCSC" id="RGD:620767">
    <property type="organism name" value="rat"/>
</dbReference>
<dbReference type="AGR" id="RGD:620767"/>
<dbReference type="CTD" id="10609"/>
<dbReference type="RGD" id="620767">
    <property type="gene designation" value="P3h4"/>
</dbReference>
<dbReference type="eggNOG" id="KOG4459">
    <property type="taxonomic scope" value="Eukaryota"/>
</dbReference>
<dbReference type="GeneTree" id="ENSGT00940000153814"/>
<dbReference type="InParanoid" id="Q64375"/>
<dbReference type="OrthoDB" id="8610171at2759"/>
<dbReference type="PRO" id="PR:Q64375"/>
<dbReference type="Proteomes" id="UP000002494">
    <property type="component" value="Chromosome 10"/>
</dbReference>
<dbReference type="Proteomes" id="UP000234681">
    <property type="component" value="Chromosome 10"/>
</dbReference>
<dbReference type="Bgee" id="ENSRNOG00000015787">
    <property type="expression patterns" value="Expressed in ovary and 20 other cell types or tissues"/>
</dbReference>
<dbReference type="ExpressionAtlas" id="Q64375">
    <property type="expression patterns" value="baseline and differential"/>
</dbReference>
<dbReference type="GO" id="GO:1902494">
    <property type="term" value="C:catalytic complex"/>
    <property type="evidence" value="ECO:0000266"/>
    <property type="project" value="RGD"/>
</dbReference>
<dbReference type="GO" id="GO:0005783">
    <property type="term" value="C:endoplasmic reticulum"/>
    <property type="evidence" value="ECO:0000250"/>
    <property type="project" value="UniProtKB"/>
</dbReference>
<dbReference type="GO" id="GO:0000795">
    <property type="term" value="C:synaptonemal complex"/>
    <property type="evidence" value="ECO:0000314"/>
    <property type="project" value="RGD"/>
</dbReference>
<dbReference type="GO" id="GO:0046849">
    <property type="term" value="P:bone remodeling"/>
    <property type="evidence" value="ECO:0000250"/>
    <property type="project" value="UniProtKB"/>
</dbReference>
<dbReference type="GO" id="GO:0032964">
    <property type="term" value="P:collagen biosynthetic process"/>
    <property type="evidence" value="ECO:0000250"/>
    <property type="project" value="UniProtKB"/>
</dbReference>
<dbReference type="GO" id="GO:0030199">
    <property type="term" value="P:collagen fibril organization"/>
    <property type="evidence" value="ECO:0000250"/>
    <property type="project" value="UniProtKB"/>
</dbReference>
<dbReference type="GO" id="GO:0017185">
    <property type="term" value="P:peptidyl-lysine hydroxylation"/>
    <property type="evidence" value="ECO:0000250"/>
    <property type="project" value="UniProtKB"/>
</dbReference>
<dbReference type="FunFam" id="1.25.40.10:FF:000119">
    <property type="entry name" value="synaptonemal complex protein SC65"/>
    <property type="match status" value="1"/>
</dbReference>
<dbReference type="Gene3D" id="1.25.40.10">
    <property type="entry name" value="Tetratricopeptide repeat domain"/>
    <property type="match status" value="1"/>
</dbReference>
<dbReference type="InterPro" id="IPR052284">
    <property type="entry name" value="Collagen_mod_leprecan"/>
</dbReference>
<dbReference type="InterPro" id="IPR056585">
    <property type="entry name" value="Leprecan_dom"/>
</dbReference>
<dbReference type="InterPro" id="IPR011990">
    <property type="entry name" value="TPR-like_helical_dom_sf"/>
</dbReference>
<dbReference type="PANTHER" id="PTHR13986:SF4">
    <property type="entry name" value="ENDOPLASMIC RETICULUM PROTEIN SC65"/>
    <property type="match status" value="1"/>
</dbReference>
<dbReference type="PANTHER" id="PTHR13986">
    <property type="entry name" value="PROTEIN LYSINE HYDROXYLATION COMPLEX COMPONENT"/>
    <property type="match status" value="1"/>
</dbReference>
<dbReference type="Pfam" id="PF23557">
    <property type="entry name" value="TPR_leprecan"/>
    <property type="match status" value="1"/>
</dbReference>
<sequence length="443" mass="51104">MARAAWGLLWLLLGSAGAQYEKYSFRGFPPEDLMPLATAYGHALEQYEGESWRESARYLEAALRLHRLLRDSEAFCHANCSGPATSQPRPAPGPDGDNEGDGEDWARELRLFGHVLERAACLRRCKRTLPAFQVPYPSRQLLRDFQNRLPYQYLHYAHFKANRLEKAVAAAYTFLQRNPKHELTAKYLNYYRGMLDIGDESLTDLEAQPYEAVFLQAVKLYNSGDFRSSTEHMERALADYMTVFARCLAGCEGAHEQVDFKDFYPAIADLFAESLQCKVDCEANLTPNVGGFFVDKFVATMYHYLQFAYYKLNDVHQAARSAASYMLFDPKDSVMQQNLVYYRFHRARWGLEEEDFQPREEAVLYHNQTSELRELLDFTHMYLQSDDEMELEETESLPEPEKPLSDAEFEGEGDYEEGLYADWWQEPDAKGDEDEAEPEPELA</sequence>
<comment type="function">
    <text evidence="1">Part of a complex composed of PLOD1, P3H3 and P3H4 that catalyzes hydroxylation of lysine residues in collagen alpha chains and is required for normal assembly and cross-linking of collagen fibrils. Required for normal bone density and normal skin stability via its role in hydroxylation of lysine residues in collagen alpha chains and in collagen fibril assembly.</text>
</comment>
<comment type="subunit">
    <text evidence="1">Interacts with PLOD1, P3H3 and PPIB. Identified in a complex with PLOD1 and P3H3.</text>
</comment>
<comment type="subcellular location">
    <subcellularLocation>
        <location evidence="2">Endoplasmic reticulum</location>
    </subcellularLocation>
</comment>
<comment type="tissue specificity">
    <text evidence="5">Found in testis, brain, heart and at a much lower level in liver.</text>
</comment>
<comment type="similarity">
    <text evidence="7">Belongs to the leprecan family.</text>
</comment>
<comment type="caution">
    <text evidence="5 7">Was initially identified in the synaptonemal complex (PubMed:1363622). Characterization data from human and mouse indicate the protein is in the endoplasmic reticulum, which agrees with its biological function and the predicted signal sequence.</text>
</comment>
<comment type="sequence caution" evidence="7">
    <conflict type="erroneous initiation">
        <sequence resource="EMBL-CDS" id="CAA46449"/>
    </conflict>
    <text>Truncated N-terminus.</text>
</comment>
<comment type="sequence caution" evidence="7">
    <conflict type="frameshift">
        <sequence resource="EMBL-CDS" id="CAA46449"/>
    </conflict>
</comment>
<organism>
    <name type="scientific">Rattus norvegicus</name>
    <name type="common">Rat</name>
    <dbReference type="NCBI Taxonomy" id="10116"/>
    <lineage>
        <taxon>Eukaryota</taxon>
        <taxon>Metazoa</taxon>
        <taxon>Chordata</taxon>
        <taxon>Craniata</taxon>
        <taxon>Vertebrata</taxon>
        <taxon>Euteleostomi</taxon>
        <taxon>Mammalia</taxon>
        <taxon>Eutheria</taxon>
        <taxon>Euarchontoglires</taxon>
        <taxon>Glires</taxon>
        <taxon>Rodentia</taxon>
        <taxon>Myomorpha</taxon>
        <taxon>Muroidea</taxon>
        <taxon>Muridae</taxon>
        <taxon>Murinae</taxon>
        <taxon>Rattus</taxon>
    </lineage>
</organism>
<feature type="signal peptide" evidence="3">
    <location>
        <begin position="1"/>
        <end position="18"/>
    </location>
</feature>
<feature type="chain" id="PRO_0000150368" description="Endoplasmic reticulum protein SC65">
    <location>
        <begin position="19"/>
        <end position="443"/>
    </location>
</feature>
<feature type="region of interest" description="Disordered" evidence="4">
    <location>
        <begin position="81"/>
        <end position="102"/>
    </location>
</feature>
<feature type="region of interest" description="Disordered" evidence="4">
    <location>
        <begin position="387"/>
        <end position="443"/>
    </location>
</feature>
<feature type="compositionally biased region" description="Acidic residues" evidence="4">
    <location>
        <begin position="387"/>
        <end position="398"/>
    </location>
</feature>
<feature type="compositionally biased region" description="Acidic residues" evidence="4">
    <location>
        <begin position="407"/>
        <end position="419"/>
    </location>
</feature>
<feature type="compositionally biased region" description="Acidic residues" evidence="4">
    <location>
        <begin position="431"/>
        <end position="443"/>
    </location>
</feature>
<feature type="glycosylation site" description="N-linked (GlcNAc...) asparagine" evidence="3">
    <location>
        <position position="367"/>
    </location>
</feature>
<accession>Q64375</accession>
<accession>A0A096MJK4</accession>
<reference key="1">
    <citation type="journal article" date="2004" name="Nature">
        <title>Genome sequence of the Brown Norway rat yields insights into mammalian evolution.</title>
        <authorList>
            <person name="Gibbs R.A."/>
            <person name="Weinstock G.M."/>
            <person name="Metzker M.L."/>
            <person name="Muzny D.M."/>
            <person name="Sodergren E.J."/>
            <person name="Scherer S."/>
            <person name="Scott G."/>
            <person name="Steffen D."/>
            <person name="Worley K.C."/>
            <person name="Burch P.E."/>
            <person name="Okwuonu G."/>
            <person name="Hines S."/>
            <person name="Lewis L."/>
            <person name="Deramo C."/>
            <person name="Delgado O."/>
            <person name="Dugan-Rocha S."/>
            <person name="Miner G."/>
            <person name="Morgan M."/>
            <person name="Hawes A."/>
            <person name="Gill R."/>
            <person name="Holt R.A."/>
            <person name="Adams M.D."/>
            <person name="Amanatides P.G."/>
            <person name="Baden-Tillson H."/>
            <person name="Barnstead M."/>
            <person name="Chin S."/>
            <person name="Evans C.A."/>
            <person name="Ferriera S."/>
            <person name="Fosler C."/>
            <person name="Glodek A."/>
            <person name="Gu Z."/>
            <person name="Jennings D."/>
            <person name="Kraft C.L."/>
            <person name="Nguyen T."/>
            <person name="Pfannkoch C.M."/>
            <person name="Sitter C."/>
            <person name="Sutton G.G."/>
            <person name="Venter J.C."/>
            <person name="Woodage T."/>
            <person name="Smith D."/>
            <person name="Lee H.-M."/>
            <person name="Gustafson E."/>
            <person name="Cahill P."/>
            <person name="Kana A."/>
            <person name="Doucette-Stamm L."/>
            <person name="Weinstock K."/>
            <person name="Fechtel K."/>
            <person name="Weiss R.B."/>
            <person name="Dunn D.M."/>
            <person name="Green E.D."/>
            <person name="Blakesley R.W."/>
            <person name="Bouffard G.G."/>
            <person name="De Jong P.J."/>
            <person name="Osoegawa K."/>
            <person name="Zhu B."/>
            <person name="Marra M."/>
            <person name="Schein J."/>
            <person name="Bosdet I."/>
            <person name="Fjell C."/>
            <person name="Jones S."/>
            <person name="Krzywinski M."/>
            <person name="Mathewson C."/>
            <person name="Siddiqui A."/>
            <person name="Wye N."/>
            <person name="McPherson J."/>
            <person name="Zhao S."/>
            <person name="Fraser C.M."/>
            <person name="Shetty J."/>
            <person name="Shatsman S."/>
            <person name="Geer K."/>
            <person name="Chen Y."/>
            <person name="Abramzon S."/>
            <person name="Nierman W.C."/>
            <person name="Havlak P.H."/>
            <person name="Chen R."/>
            <person name="Durbin K.J."/>
            <person name="Egan A."/>
            <person name="Ren Y."/>
            <person name="Song X.-Z."/>
            <person name="Li B."/>
            <person name="Liu Y."/>
            <person name="Qin X."/>
            <person name="Cawley S."/>
            <person name="Cooney A.J."/>
            <person name="D'Souza L.M."/>
            <person name="Martin K."/>
            <person name="Wu J.Q."/>
            <person name="Gonzalez-Garay M.L."/>
            <person name="Jackson A.R."/>
            <person name="Kalafus K.J."/>
            <person name="McLeod M.P."/>
            <person name="Milosavljevic A."/>
            <person name="Virk D."/>
            <person name="Volkov A."/>
            <person name="Wheeler D.A."/>
            <person name="Zhang Z."/>
            <person name="Bailey J.A."/>
            <person name="Eichler E.E."/>
            <person name="Tuzun E."/>
            <person name="Birney E."/>
            <person name="Mongin E."/>
            <person name="Ureta-Vidal A."/>
            <person name="Woodwark C."/>
            <person name="Zdobnov E."/>
            <person name="Bork P."/>
            <person name="Suyama M."/>
            <person name="Torrents D."/>
            <person name="Alexandersson M."/>
            <person name="Trask B.J."/>
            <person name="Young J.M."/>
            <person name="Huang H."/>
            <person name="Wang H."/>
            <person name="Xing H."/>
            <person name="Daniels S."/>
            <person name="Gietzen D."/>
            <person name="Schmidt J."/>
            <person name="Stevens K."/>
            <person name="Vitt U."/>
            <person name="Wingrove J."/>
            <person name="Camara F."/>
            <person name="Mar Alba M."/>
            <person name="Abril J.F."/>
            <person name="Guigo R."/>
            <person name="Smit A."/>
            <person name="Dubchak I."/>
            <person name="Rubin E.M."/>
            <person name="Couronne O."/>
            <person name="Poliakov A."/>
            <person name="Huebner N."/>
            <person name="Ganten D."/>
            <person name="Goesele C."/>
            <person name="Hummel O."/>
            <person name="Kreitler T."/>
            <person name="Lee Y.-A."/>
            <person name="Monti J."/>
            <person name="Schulz H."/>
            <person name="Zimdahl H."/>
            <person name="Himmelbauer H."/>
            <person name="Lehrach H."/>
            <person name="Jacob H.J."/>
            <person name="Bromberg S."/>
            <person name="Gullings-Handley J."/>
            <person name="Jensen-Seaman M.I."/>
            <person name="Kwitek A.E."/>
            <person name="Lazar J."/>
            <person name="Pasko D."/>
            <person name="Tonellato P.J."/>
            <person name="Twigger S."/>
            <person name="Ponting C.P."/>
            <person name="Duarte J.M."/>
            <person name="Rice S."/>
            <person name="Goodstadt L."/>
            <person name="Beatson S.A."/>
            <person name="Emes R.D."/>
            <person name="Winter E.E."/>
            <person name="Webber C."/>
            <person name="Brandt P."/>
            <person name="Nyakatura G."/>
            <person name="Adetobi M."/>
            <person name="Chiaromonte F."/>
            <person name="Elnitski L."/>
            <person name="Eswara P."/>
            <person name="Hardison R.C."/>
            <person name="Hou M."/>
            <person name="Kolbe D."/>
            <person name="Makova K."/>
            <person name="Miller W."/>
            <person name="Nekrutenko A."/>
            <person name="Riemer C."/>
            <person name="Schwartz S."/>
            <person name="Taylor J."/>
            <person name="Yang S."/>
            <person name="Zhang Y."/>
            <person name="Lindpaintner K."/>
            <person name="Andrews T.D."/>
            <person name="Caccamo M."/>
            <person name="Clamp M."/>
            <person name="Clarke L."/>
            <person name="Curwen V."/>
            <person name="Durbin R.M."/>
            <person name="Eyras E."/>
            <person name="Searle S.M."/>
            <person name="Cooper G.M."/>
            <person name="Batzoglou S."/>
            <person name="Brudno M."/>
            <person name="Sidow A."/>
            <person name="Stone E.A."/>
            <person name="Payseur B.A."/>
            <person name="Bourque G."/>
            <person name="Lopez-Otin C."/>
            <person name="Puente X.S."/>
            <person name="Chakrabarti K."/>
            <person name="Chatterji S."/>
            <person name="Dewey C."/>
            <person name="Pachter L."/>
            <person name="Bray N."/>
            <person name="Yap V.B."/>
            <person name="Caspi A."/>
            <person name="Tesler G."/>
            <person name="Pevzner P.A."/>
            <person name="Haussler D."/>
            <person name="Roskin K.M."/>
            <person name="Baertsch R."/>
            <person name="Clawson H."/>
            <person name="Furey T.S."/>
            <person name="Hinrichs A.S."/>
            <person name="Karolchik D."/>
            <person name="Kent W.J."/>
            <person name="Rosenbloom K.R."/>
            <person name="Trumbower H."/>
            <person name="Weirauch M."/>
            <person name="Cooper D.N."/>
            <person name="Stenson P.D."/>
            <person name="Ma B."/>
            <person name="Brent M."/>
            <person name="Arumugam M."/>
            <person name="Shteynberg D."/>
            <person name="Copley R.R."/>
            <person name="Taylor M.S."/>
            <person name="Riethman H."/>
            <person name="Mudunuri U."/>
            <person name="Peterson J."/>
            <person name="Guyer M."/>
            <person name="Felsenfeld A."/>
            <person name="Old S."/>
            <person name="Mockrin S."/>
            <person name="Collins F.S."/>
        </authorList>
    </citation>
    <scope>NUCLEOTIDE SEQUENCE [LARGE SCALE GENOMIC DNA]</scope>
    <source>
        <strain>Brown Norway</strain>
    </source>
</reference>
<reference key="2">
    <citation type="submission" date="2005-07" db="EMBL/GenBank/DDBJ databases">
        <authorList>
            <person name="Mural R.J."/>
            <person name="Adams M.D."/>
            <person name="Myers E.W."/>
            <person name="Smith H.O."/>
            <person name="Venter J.C."/>
        </authorList>
    </citation>
    <scope>NUCLEOTIDE SEQUENCE [LARGE SCALE GENOMIC DNA]</scope>
</reference>
<reference key="3">
    <citation type="journal article" date="1992" name="Biochem. Cell Biol.">
        <title>Isolation and characterization of a cDNA encoding a synaptonemal complex protein.</title>
        <authorList>
            <person name="Chen Q."/>
            <person name="Pearlman R.E."/>
            <person name="Moens P.B."/>
        </authorList>
    </citation>
    <scope>NUCLEOTIDE SEQUENCE [MRNA] OF 30-414</scope>
    <scope>SUBCELLULAR LOCATION</scope>
    <scope>TISSUE SPECIFICITY</scope>
    <source>
        <tissue>Testis</tissue>
    </source>
</reference>
<proteinExistence type="evidence at transcript level"/>